<proteinExistence type="inferred from homology"/>
<comment type="function">
    <text evidence="1">Participates in chromosomal partition during cell division. May act via the formation of a condensin-like complex containing Smc and ScpB that pull DNA away from mid-cell into both cell halves.</text>
</comment>
<comment type="subunit">
    <text evidence="1">Component of a cohesin-like complex composed of ScpA, ScpB and the Smc homodimer, in which ScpA and ScpB bind to the head domain of Smc. The presence of the three proteins is required for the association of the complex with DNA.</text>
</comment>
<comment type="subcellular location">
    <subcellularLocation>
        <location evidence="1">Cytoplasm</location>
    </subcellularLocation>
    <text evidence="1">Associated with two foci at the outer edges of the nucleoid region in young cells, and at four foci within both cell halves in older cells.</text>
</comment>
<comment type="similarity">
    <text evidence="1">Belongs to the ScpA family.</text>
</comment>
<sequence length="234" mass="27366">MDIKLKDFEGPLDLLLHLVSQYKVDIYEVPIVEVIEQYLNYIETLQVMKLEVAGDYMLMASQLMLIKSRRLLPKVVEHIEEEDLEQDLLEKIEEYSRFKAVSQALAKQHDQRAKWYSKPKQELIFEDAILQEDKTVMDLFLAFSNIMAAKRAVLKTNHTVIERDDYKIEDMMASIKQRLEKENVISLSAIFEECQTLNEVISIFLASLELIKLHVVFVEQLSNFGAIILRKEKK</sequence>
<gene>
    <name evidence="1" type="primary">scpA</name>
    <name type="ordered locus">Spy49_0302</name>
</gene>
<accession>B5XJX8</accession>
<keyword id="KW-0131">Cell cycle</keyword>
<keyword id="KW-0132">Cell division</keyword>
<keyword id="KW-0159">Chromosome partition</keyword>
<keyword id="KW-0963">Cytoplasm</keyword>
<organism>
    <name type="scientific">Streptococcus pyogenes serotype M49 (strain NZ131)</name>
    <dbReference type="NCBI Taxonomy" id="471876"/>
    <lineage>
        <taxon>Bacteria</taxon>
        <taxon>Bacillati</taxon>
        <taxon>Bacillota</taxon>
        <taxon>Bacilli</taxon>
        <taxon>Lactobacillales</taxon>
        <taxon>Streptococcaceae</taxon>
        <taxon>Streptococcus</taxon>
    </lineage>
</organism>
<evidence type="ECO:0000255" key="1">
    <source>
        <dbReference type="HAMAP-Rule" id="MF_01805"/>
    </source>
</evidence>
<feature type="chain" id="PRO_1000187573" description="Segregation and condensation protein A">
    <location>
        <begin position="1"/>
        <end position="234"/>
    </location>
</feature>
<reference key="1">
    <citation type="journal article" date="2008" name="J. Bacteriol.">
        <title>Genome sequence of a nephritogenic and highly transformable M49 strain of Streptococcus pyogenes.</title>
        <authorList>
            <person name="McShan W.M."/>
            <person name="Ferretti J.J."/>
            <person name="Karasawa T."/>
            <person name="Suvorov A.N."/>
            <person name="Lin S."/>
            <person name="Qin B."/>
            <person name="Jia H."/>
            <person name="Kenton S."/>
            <person name="Najar F."/>
            <person name="Wu H."/>
            <person name="Scott J."/>
            <person name="Roe B.A."/>
            <person name="Savic D.J."/>
        </authorList>
    </citation>
    <scope>NUCLEOTIDE SEQUENCE [LARGE SCALE GENOMIC DNA]</scope>
    <source>
        <strain>NZ131</strain>
    </source>
</reference>
<name>SCPA_STRPZ</name>
<dbReference type="EMBL" id="CP000829">
    <property type="protein sequence ID" value="ACI60640.1"/>
    <property type="molecule type" value="Genomic_DNA"/>
</dbReference>
<dbReference type="SMR" id="B5XJX8"/>
<dbReference type="KEGG" id="soz:Spy49_0302"/>
<dbReference type="HOGENOM" id="CLU_038686_3_3_9"/>
<dbReference type="Proteomes" id="UP000001039">
    <property type="component" value="Chromosome"/>
</dbReference>
<dbReference type="GO" id="GO:0005737">
    <property type="term" value="C:cytoplasm"/>
    <property type="evidence" value="ECO:0007669"/>
    <property type="project" value="UniProtKB-SubCell"/>
</dbReference>
<dbReference type="GO" id="GO:0051301">
    <property type="term" value="P:cell division"/>
    <property type="evidence" value="ECO:0007669"/>
    <property type="project" value="UniProtKB-KW"/>
</dbReference>
<dbReference type="GO" id="GO:0007059">
    <property type="term" value="P:chromosome segregation"/>
    <property type="evidence" value="ECO:0007669"/>
    <property type="project" value="UniProtKB-UniRule"/>
</dbReference>
<dbReference type="GO" id="GO:0006260">
    <property type="term" value="P:DNA replication"/>
    <property type="evidence" value="ECO:0007669"/>
    <property type="project" value="UniProtKB-UniRule"/>
</dbReference>
<dbReference type="Gene3D" id="6.10.250.2410">
    <property type="match status" value="1"/>
</dbReference>
<dbReference type="HAMAP" id="MF_01805">
    <property type="entry name" value="ScpA"/>
    <property type="match status" value="1"/>
</dbReference>
<dbReference type="InterPro" id="IPR003768">
    <property type="entry name" value="ScpA"/>
</dbReference>
<dbReference type="NCBIfam" id="NF000993">
    <property type="entry name" value="PRK00104.1-2"/>
    <property type="match status" value="1"/>
</dbReference>
<dbReference type="PANTHER" id="PTHR33969">
    <property type="entry name" value="SEGREGATION AND CONDENSATION PROTEIN A"/>
    <property type="match status" value="1"/>
</dbReference>
<dbReference type="PANTHER" id="PTHR33969:SF2">
    <property type="entry name" value="SEGREGATION AND CONDENSATION PROTEIN A"/>
    <property type="match status" value="1"/>
</dbReference>
<dbReference type="Pfam" id="PF02616">
    <property type="entry name" value="SMC_ScpA"/>
    <property type="match status" value="1"/>
</dbReference>
<protein>
    <recommendedName>
        <fullName evidence="1">Segregation and condensation protein A</fullName>
    </recommendedName>
</protein>